<feature type="chain" id="PRO_0000046259" description="Potassium-transporting ATPase alpha chain 2">
    <location>
        <begin position="1"/>
        <end position="1033"/>
    </location>
</feature>
<feature type="topological domain" description="Cytoplasmic" evidence="2">
    <location>
        <begin position="1"/>
        <end position="96"/>
    </location>
</feature>
<feature type="transmembrane region" description="Helical" evidence="2">
    <location>
        <begin position="97"/>
        <end position="117"/>
    </location>
</feature>
<feature type="topological domain" description="Lumenal" evidence="2">
    <location>
        <begin position="118"/>
        <end position="140"/>
    </location>
</feature>
<feature type="transmembrane region" description="Helical" evidence="2">
    <location>
        <begin position="141"/>
        <end position="161"/>
    </location>
</feature>
<feature type="topological domain" description="Cytoplasmic" evidence="2">
    <location>
        <begin position="162"/>
        <end position="297"/>
    </location>
</feature>
<feature type="transmembrane region" description="Helical" evidence="2">
    <location>
        <begin position="298"/>
        <end position="317"/>
    </location>
</feature>
<feature type="topological domain" description="Lumenal" evidence="2">
    <location>
        <begin position="318"/>
        <end position="329"/>
    </location>
</feature>
<feature type="transmembrane region" description="Helical" evidence="2">
    <location>
        <begin position="330"/>
        <end position="347"/>
    </location>
</feature>
<feature type="topological domain" description="Cytoplasmic" evidence="2">
    <location>
        <begin position="348"/>
        <end position="781"/>
    </location>
</feature>
<feature type="transmembrane region" description="Helical" evidence="2">
    <location>
        <begin position="782"/>
        <end position="801"/>
    </location>
</feature>
<feature type="topological domain" description="Lumenal" evidence="2">
    <location>
        <begin position="802"/>
        <end position="811"/>
    </location>
</feature>
<feature type="transmembrane region" description="Helical" evidence="2">
    <location>
        <begin position="812"/>
        <end position="832"/>
    </location>
</feature>
<feature type="topological domain" description="Cytoplasmic" evidence="2">
    <location>
        <begin position="833"/>
        <end position="852"/>
    </location>
</feature>
<feature type="transmembrane region" description="Helical" evidence="2">
    <location>
        <begin position="853"/>
        <end position="875"/>
    </location>
</feature>
<feature type="topological domain" description="Lumenal" evidence="2">
    <location>
        <begin position="876"/>
        <end position="927"/>
    </location>
</feature>
<feature type="transmembrane region" description="Helical" evidence="2">
    <location>
        <begin position="928"/>
        <end position="947"/>
    </location>
</feature>
<feature type="topological domain" description="Cytoplasmic" evidence="2">
    <location>
        <begin position="948"/>
        <end position="961"/>
    </location>
</feature>
<feature type="transmembrane region" description="Helical" evidence="2">
    <location>
        <begin position="962"/>
        <end position="980"/>
    </location>
</feature>
<feature type="topological domain" description="Lumenal" evidence="2">
    <location>
        <begin position="981"/>
        <end position="995"/>
    </location>
</feature>
<feature type="transmembrane region" description="Helical" evidence="2">
    <location>
        <begin position="996"/>
        <end position="1016"/>
    </location>
</feature>
<feature type="topological domain" description="Cytoplasmic" evidence="2">
    <location>
        <begin position="1017"/>
        <end position="1033"/>
    </location>
</feature>
<feature type="active site" description="4-aspartylphosphate intermediate" evidence="1">
    <location>
        <position position="385"/>
    </location>
</feature>
<feature type="binding site" evidence="1">
    <location>
        <position position="726"/>
    </location>
    <ligand>
        <name>Mg(2+)</name>
        <dbReference type="ChEBI" id="CHEBI:18420"/>
    </ligand>
</feature>
<feature type="binding site" evidence="1">
    <location>
        <position position="730"/>
    </location>
    <ligand>
        <name>Mg(2+)</name>
        <dbReference type="ChEBI" id="CHEBI:18420"/>
    </ligand>
</feature>
<feature type="modified residue" description="Phosphoserine; by PKA" evidence="1">
    <location>
        <position position="952"/>
    </location>
</feature>
<proteinExistence type="evidence at transcript level"/>
<gene>
    <name type="primary">ATP12A</name>
    <name type="synonym">ATP1AL1</name>
</gene>
<organism>
    <name type="scientific">Cavia porcellus</name>
    <name type="common">Guinea pig</name>
    <dbReference type="NCBI Taxonomy" id="10141"/>
    <lineage>
        <taxon>Eukaryota</taxon>
        <taxon>Metazoa</taxon>
        <taxon>Chordata</taxon>
        <taxon>Craniata</taxon>
        <taxon>Vertebrata</taxon>
        <taxon>Euteleostomi</taxon>
        <taxon>Mammalia</taxon>
        <taxon>Eutheria</taxon>
        <taxon>Euarchontoglires</taxon>
        <taxon>Glires</taxon>
        <taxon>Rodentia</taxon>
        <taxon>Hystricomorpha</taxon>
        <taxon>Caviidae</taxon>
        <taxon>Cavia</taxon>
    </lineage>
</organism>
<name>AT12A_CAVPO</name>
<evidence type="ECO:0000250" key="1"/>
<evidence type="ECO:0000255" key="2"/>
<evidence type="ECO:0000269" key="3">
    <source>
    </source>
</evidence>
<evidence type="ECO:0000305" key="4"/>
<accession>Q64392</accession>
<dbReference type="EC" id="7.2.2.19"/>
<dbReference type="EMBL" id="D21854">
    <property type="protein sequence ID" value="BAA04880.1"/>
    <property type="molecule type" value="mRNA"/>
</dbReference>
<dbReference type="RefSeq" id="NP_001166387.1">
    <property type="nucleotide sequence ID" value="NM_001172916.1"/>
</dbReference>
<dbReference type="SMR" id="Q64392"/>
<dbReference type="FunCoup" id="Q64392">
    <property type="interactions" value="269"/>
</dbReference>
<dbReference type="STRING" id="10141.ENSCPOP00000029059"/>
<dbReference type="Ensembl" id="ENSCPOT00000003451.3">
    <property type="protein sequence ID" value="ENSCPOP00000003081.2"/>
    <property type="gene ID" value="ENSCPOG00000003407.4"/>
</dbReference>
<dbReference type="GeneID" id="100135482"/>
<dbReference type="KEGG" id="cpoc:100135482"/>
<dbReference type="CTD" id="479"/>
<dbReference type="VEuPathDB" id="HostDB:ENSCPOG00000003407"/>
<dbReference type="eggNOG" id="KOG0203">
    <property type="taxonomic scope" value="Eukaryota"/>
</dbReference>
<dbReference type="GeneTree" id="ENSGT00940000159259"/>
<dbReference type="HOGENOM" id="CLU_002360_4_1_1"/>
<dbReference type="InParanoid" id="Q64392"/>
<dbReference type="OrthoDB" id="3352408at2759"/>
<dbReference type="TreeFam" id="TF312838"/>
<dbReference type="Proteomes" id="UP000005447">
    <property type="component" value="Unassembled WGS sequence"/>
</dbReference>
<dbReference type="Bgee" id="ENSCPOG00000003407">
    <property type="expression patterns" value="Expressed in zone of skin and 3 other cell types or tissues"/>
</dbReference>
<dbReference type="GO" id="GO:0005886">
    <property type="term" value="C:plasma membrane"/>
    <property type="evidence" value="ECO:0007669"/>
    <property type="project" value="TreeGrafter"/>
</dbReference>
<dbReference type="GO" id="GO:0005524">
    <property type="term" value="F:ATP binding"/>
    <property type="evidence" value="ECO:0007669"/>
    <property type="project" value="UniProtKB-KW"/>
</dbReference>
<dbReference type="GO" id="GO:0016887">
    <property type="term" value="F:ATP hydrolysis activity"/>
    <property type="evidence" value="ECO:0007669"/>
    <property type="project" value="InterPro"/>
</dbReference>
<dbReference type="GO" id="GO:0046872">
    <property type="term" value="F:metal ion binding"/>
    <property type="evidence" value="ECO:0007669"/>
    <property type="project" value="UniProtKB-KW"/>
</dbReference>
<dbReference type="GO" id="GO:0008900">
    <property type="term" value="F:P-type potassium:proton transporter activity"/>
    <property type="evidence" value="ECO:0007669"/>
    <property type="project" value="UniProtKB-EC"/>
</dbReference>
<dbReference type="GO" id="GO:0005391">
    <property type="term" value="F:P-type sodium:potassium-exchanging transporter activity"/>
    <property type="evidence" value="ECO:0007669"/>
    <property type="project" value="TreeGrafter"/>
</dbReference>
<dbReference type="GO" id="GO:0030007">
    <property type="term" value="P:intracellular potassium ion homeostasis"/>
    <property type="evidence" value="ECO:0007669"/>
    <property type="project" value="TreeGrafter"/>
</dbReference>
<dbReference type="GO" id="GO:0006883">
    <property type="term" value="P:intracellular sodium ion homeostasis"/>
    <property type="evidence" value="ECO:0007669"/>
    <property type="project" value="TreeGrafter"/>
</dbReference>
<dbReference type="GO" id="GO:1990573">
    <property type="term" value="P:potassium ion import across plasma membrane"/>
    <property type="evidence" value="ECO:0007669"/>
    <property type="project" value="TreeGrafter"/>
</dbReference>
<dbReference type="GO" id="GO:0036376">
    <property type="term" value="P:sodium ion export across plasma membrane"/>
    <property type="evidence" value="ECO:0007669"/>
    <property type="project" value="TreeGrafter"/>
</dbReference>
<dbReference type="CDD" id="cd02608">
    <property type="entry name" value="P-type_ATPase_Na-K_like"/>
    <property type="match status" value="1"/>
</dbReference>
<dbReference type="FunFam" id="3.40.50.1000:FF:000001">
    <property type="entry name" value="Phospholipid-transporting ATPase IC"/>
    <property type="match status" value="1"/>
</dbReference>
<dbReference type="FunFam" id="1.20.1110.10:FF:000038">
    <property type="entry name" value="Sodium/potassium-transporting ATPase subunit alpha"/>
    <property type="match status" value="1"/>
</dbReference>
<dbReference type="FunFam" id="2.70.150.10:FF:000003">
    <property type="entry name" value="Sodium/potassium-transporting ATPase subunit alpha"/>
    <property type="match status" value="1"/>
</dbReference>
<dbReference type="FunFam" id="3.40.1110.10:FF:000001">
    <property type="entry name" value="Sodium/potassium-transporting ATPase subunit alpha"/>
    <property type="match status" value="1"/>
</dbReference>
<dbReference type="FunFam" id="3.40.50.1000:FF:000004">
    <property type="entry name" value="Sodium/potassium-transporting ATPase subunit alpha"/>
    <property type="match status" value="1"/>
</dbReference>
<dbReference type="FunFam" id="1.20.1110.10:FF:000095">
    <property type="entry name" value="Sodium/potassium-transporting ATPase subunit alpha-1"/>
    <property type="match status" value="1"/>
</dbReference>
<dbReference type="Gene3D" id="3.40.1110.10">
    <property type="entry name" value="Calcium-transporting ATPase, cytoplasmic domain N"/>
    <property type="match status" value="1"/>
</dbReference>
<dbReference type="Gene3D" id="2.70.150.10">
    <property type="entry name" value="Calcium-transporting ATPase, cytoplasmic transduction domain A"/>
    <property type="match status" value="1"/>
</dbReference>
<dbReference type="Gene3D" id="1.20.1110.10">
    <property type="entry name" value="Calcium-transporting ATPase, transmembrane domain"/>
    <property type="match status" value="1"/>
</dbReference>
<dbReference type="Gene3D" id="3.40.50.1000">
    <property type="entry name" value="HAD superfamily/HAD-like"/>
    <property type="match status" value="1"/>
</dbReference>
<dbReference type="InterPro" id="IPR006068">
    <property type="entry name" value="ATPase_P-typ_cation-transptr_C"/>
</dbReference>
<dbReference type="InterPro" id="IPR004014">
    <property type="entry name" value="ATPase_P-typ_cation-transptr_N"/>
</dbReference>
<dbReference type="InterPro" id="IPR023299">
    <property type="entry name" value="ATPase_P-typ_cyto_dom_N"/>
</dbReference>
<dbReference type="InterPro" id="IPR018303">
    <property type="entry name" value="ATPase_P-typ_P_site"/>
</dbReference>
<dbReference type="InterPro" id="IPR023298">
    <property type="entry name" value="ATPase_P-typ_TM_dom_sf"/>
</dbReference>
<dbReference type="InterPro" id="IPR008250">
    <property type="entry name" value="ATPase_P-typ_transduc_dom_A_sf"/>
</dbReference>
<dbReference type="InterPro" id="IPR050510">
    <property type="entry name" value="Cation_transp_ATPase_P-type"/>
</dbReference>
<dbReference type="InterPro" id="IPR036412">
    <property type="entry name" value="HAD-like_sf"/>
</dbReference>
<dbReference type="InterPro" id="IPR023214">
    <property type="entry name" value="HAD_sf"/>
</dbReference>
<dbReference type="InterPro" id="IPR005775">
    <property type="entry name" value="P-type_ATPase_IIC"/>
</dbReference>
<dbReference type="InterPro" id="IPR001757">
    <property type="entry name" value="P_typ_ATPase"/>
</dbReference>
<dbReference type="InterPro" id="IPR044492">
    <property type="entry name" value="P_typ_ATPase_HD_dom"/>
</dbReference>
<dbReference type="NCBIfam" id="TIGR01106">
    <property type="entry name" value="ATPase-IIC_X-K"/>
    <property type="match status" value="1"/>
</dbReference>
<dbReference type="NCBIfam" id="TIGR01494">
    <property type="entry name" value="ATPase_P-type"/>
    <property type="match status" value="2"/>
</dbReference>
<dbReference type="PANTHER" id="PTHR43294:SF1">
    <property type="entry name" value="POTASSIUM-TRANSPORTING ATPASE ALPHA CHAIN 2"/>
    <property type="match status" value="1"/>
</dbReference>
<dbReference type="PANTHER" id="PTHR43294">
    <property type="entry name" value="SODIUM/POTASSIUM-TRANSPORTING ATPASE SUBUNIT ALPHA"/>
    <property type="match status" value="1"/>
</dbReference>
<dbReference type="Pfam" id="PF13246">
    <property type="entry name" value="Cation_ATPase"/>
    <property type="match status" value="1"/>
</dbReference>
<dbReference type="Pfam" id="PF00689">
    <property type="entry name" value="Cation_ATPase_C"/>
    <property type="match status" value="1"/>
</dbReference>
<dbReference type="Pfam" id="PF00690">
    <property type="entry name" value="Cation_ATPase_N"/>
    <property type="match status" value="1"/>
</dbReference>
<dbReference type="Pfam" id="PF00122">
    <property type="entry name" value="E1-E2_ATPase"/>
    <property type="match status" value="1"/>
</dbReference>
<dbReference type="Pfam" id="PF00702">
    <property type="entry name" value="Hydrolase"/>
    <property type="match status" value="1"/>
</dbReference>
<dbReference type="PRINTS" id="PR00119">
    <property type="entry name" value="CATATPASE"/>
</dbReference>
<dbReference type="PRINTS" id="PR00121">
    <property type="entry name" value="NAKATPASE"/>
</dbReference>
<dbReference type="SFLD" id="SFLDG00002">
    <property type="entry name" value="C1.7:_P-type_atpase_like"/>
    <property type="match status" value="1"/>
</dbReference>
<dbReference type="SFLD" id="SFLDF00027">
    <property type="entry name" value="p-type_atpase"/>
    <property type="match status" value="1"/>
</dbReference>
<dbReference type="SMART" id="SM00831">
    <property type="entry name" value="Cation_ATPase_N"/>
    <property type="match status" value="1"/>
</dbReference>
<dbReference type="SUPFAM" id="SSF81653">
    <property type="entry name" value="Calcium ATPase, transduction domain A"/>
    <property type="match status" value="1"/>
</dbReference>
<dbReference type="SUPFAM" id="SSF81665">
    <property type="entry name" value="Calcium ATPase, transmembrane domain M"/>
    <property type="match status" value="1"/>
</dbReference>
<dbReference type="SUPFAM" id="SSF56784">
    <property type="entry name" value="HAD-like"/>
    <property type="match status" value="1"/>
</dbReference>
<dbReference type="SUPFAM" id="SSF81660">
    <property type="entry name" value="Metal cation-transporting ATPase, ATP-binding domain N"/>
    <property type="match status" value="1"/>
</dbReference>
<dbReference type="PROSITE" id="PS00154">
    <property type="entry name" value="ATPASE_E1_E2"/>
    <property type="match status" value="1"/>
</dbReference>
<comment type="function">
    <text>Catalyzes the hydrolysis of ATP coupled with the exchange of H(+) and K(+) ions across the plasma membrane. Responsible for potassium absorption in various tissues.</text>
</comment>
<comment type="catalytic activity">
    <reaction>
        <text>K(+)(out) + ATP + H2O + H(+)(in) = K(+)(in) + ADP + phosphate + 2 H(+)(out)</text>
        <dbReference type="Rhea" id="RHEA:22044"/>
        <dbReference type="ChEBI" id="CHEBI:15377"/>
        <dbReference type="ChEBI" id="CHEBI:15378"/>
        <dbReference type="ChEBI" id="CHEBI:29103"/>
        <dbReference type="ChEBI" id="CHEBI:30616"/>
        <dbReference type="ChEBI" id="CHEBI:43474"/>
        <dbReference type="ChEBI" id="CHEBI:456216"/>
        <dbReference type="EC" id="7.2.2.19"/>
    </reaction>
</comment>
<comment type="subunit">
    <text>Composed of two subunits: alpha (catalytic) and beta.</text>
</comment>
<comment type="subcellular location">
    <subcellularLocation>
        <location>Membrane</location>
        <topology>Multi-pass membrane protein</topology>
    </subcellularLocation>
</comment>
<comment type="tissue specificity">
    <text evidence="3">Found in skin, kidney and distal colon.</text>
</comment>
<comment type="similarity">
    <text evidence="4">Belongs to the cation transport ATPase (P-type) (TC 3.A.3) family. Type IIC subfamily.</text>
</comment>
<protein>
    <recommendedName>
        <fullName>Potassium-transporting ATPase alpha chain 2</fullName>
        <ecNumber>7.2.2.19</ecNumber>
    </recommendedName>
    <alternativeName>
        <fullName>Non-gastric H(+)/K(+) ATPase subunit alpha</fullName>
    </alternativeName>
    <alternativeName>
        <fullName>Proton pump</fullName>
    </alternativeName>
</protein>
<keyword id="KW-0067">ATP-binding</keyword>
<keyword id="KW-0375">Hydrogen ion transport</keyword>
<keyword id="KW-0406">Ion transport</keyword>
<keyword id="KW-0460">Magnesium</keyword>
<keyword id="KW-0472">Membrane</keyword>
<keyword id="KW-0479">Metal-binding</keyword>
<keyword id="KW-0547">Nucleotide-binding</keyword>
<keyword id="KW-0597">Phosphoprotein</keyword>
<keyword id="KW-0630">Potassium</keyword>
<keyword id="KW-0633">Potassium transport</keyword>
<keyword id="KW-1185">Reference proteome</keyword>
<keyword id="KW-1278">Translocase</keyword>
<keyword id="KW-0812">Transmembrane</keyword>
<keyword id="KW-1133">Transmembrane helix</keyword>
<keyword id="KW-0813">Transport</keyword>
<sequence>MRRKTLEIYSVELDGTKDTKQLGQEEGKKCNELDLKKSSQKEELKKELDLDDHKLTSEELEQKYGTNIIRGLSSTRAAELLARDGPNALSPPKQTPEIIKFLKQMIGGFSILLWVGAILCWIAYGIQYASNQSGSLDNVYLGVVLALVVILTGIFAYYQEAKSTNIMSSFSKMIPQEALVTRDAEKKVIPAEQLVVGDIVEIKGGDQIPADIRLLFSQGCKVDNSSLTGESEPQPRSAEFTHENPLETKNIAFYSTTCLEGTATGMVINTGDRTIIGRIASLASGVGNEKTPIATEIEHFVHIVAGVAVSIGILFFIIAVSLKYRVLDSIIFLIGIIVANVPEGLLATVTVTLSLTAKRMAKKNCLVKNLEAVETLGSTSVICSDKTGTLTQNRMTVAHLWFDSQIFTADTSESQSNQAFDQSSGTWASLSKIIALCNRAEFRPGQENVPIMKRVVVGDASETALLKFSEVILGDVMEIRKRNRKVAEIPFNSTNKFQLSIHETEDPGDPRFLMVMKGAPERILEKCSTIMINGQEQPLDKNNANAFHTAYMELGGMGERVLGFCHLYLPAHEFPENYSFDVDTMNFPTSNLCFVGLLSMIDPPRSTVPDAVAKCRSAGIKVIMVTGDHPITAKAIAKSVGIISANSETVEDIAKRCNIAVEQVNKQDARAAVVTGMELKDMTPEQLDEILANYPEIVFARTSPQQKLIIVEGCQRQNAVVAVTGDGVNDSPALKKADIGIAMGIAGSDAAKNAADMVLLDDNFASIVTGVEEGRLIFDNLKKTIAYTLTKNIAELCPFLVYIIVGLPLPIGTITILFIDLGTDIIPSIALAYEKVESDIMNRKPRHKKKDRLVNHQLAIYSYLHIGLMQALGAFLVYFTVYAQQGFWPTSLIQLRVKWEQDYVNDLEDSYGQQWTRYQRKYLEWTGYTAFFVGIMVQQIADLIIRKTRRNSIFQQGLFRNKVIWVGITSQIIVALILSCGLGSITALNFTMLRVQYWFVAVPHAILIWVYDEVRKLFLRLYPGSWWDKNMYY</sequence>
<reference key="1">
    <citation type="submission" date="1993-10" db="EMBL/GenBank/DDBJ databases">
        <title>Isolation and characterization of cDNA encoding the putative guinea pig distal colon H+, K+ -ATPase alpha subunit.</title>
        <authorList>
            <person name="Watanabe T."/>
            <person name="Sato M."/>
            <person name="Kaneko K."/>
            <person name="Suzuki T."/>
            <person name="Yoshida T."/>
            <person name="Suzuki Y."/>
        </authorList>
    </citation>
    <scope>NUCLEOTIDE SEQUENCE [MRNA]</scope>
    <source>
        <strain>Hartley</strain>
    </source>
</reference>
<reference key="2">
    <citation type="journal article" date="1998" name="FEBS Lett.">
        <title>Ouabain-sensitive H,K-ATPase: tissue-specific expression of the mammalian genes encoding the catalytic alpha subunit.</title>
        <authorList>
            <person name="Pestov N.B."/>
            <person name="Romanova L.G."/>
            <person name="Korneenko T.V."/>
            <person name="Egorov M.V."/>
            <person name="Kostina M.B."/>
            <person name="Sverdlov V.E."/>
            <person name="Askari A."/>
            <person name="Shakhparonov M.I."/>
            <person name="Modyanov N.N."/>
        </authorList>
    </citation>
    <scope>TISSUE SPECIFICITY</scope>
</reference>